<feature type="chain" id="PRO_1000139908" description="HPr kinase/phosphorylase">
    <location>
        <begin position="1"/>
        <end position="340"/>
    </location>
</feature>
<feature type="region of interest" description="Important for the catalytic mechanism of both phosphorylation and dephosphorylation" evidence="1">
    <location>
        <begin position="216"/>
        <end position="225"/>
    </location>
</feature>
<feature type="region of interest" description="Important for the catalytic mechanism of dephosphorylation" evidence="1">
    <location>
        <begin position="279"/>
        <end position="284"/>
    </location>
</feature>
<feature type="active site" evidence="1">
    <location>
        <position position="153"/>
    </location>
</feature>
<feature type="active site" evidence="1">
    <location>
        <position position="174"/>
    </location>
</feature>
<feature type="active site" description="Proton acceptor; for phosphorylation activity. Proton donor; for dephosphorylation activity" evidence="1">
    <location>
        <position position="192"/>
    </location>
</feature>
<feature type="active site" evidence="1">
    <location>
        <position position="258"/>
    </location>
</feature>
<feature type="binding site" evidence="1">
    <location>
        <begin position="168"/>
        <end position="175"/>
    </location>
    <ligand>
        <name>ATP</name>
        <dbReference type="ChEBI" id="CHEBI:30616"/>
    </ligand>
</feature>
<feature type="binding site" evidence="1">
    <location>
        <position position="175"/>
    </location>
    <ligand>
        <name>Mg(2+)</name>
        <dbReference type="ChEBI" id="CHEBI:18420"/>
    </ligand>
</feature>
<feature type="binding site" evidence="1">
    <location>
        <position position="217"/>
    </location>
    <ligand>
        <name>Mg(2+)</name>
        <dbReference type="ChEBI" id="CHEBI:18420"/>
    </ligand>
</feature>
<organism>
    <name type="scientific">Prosthecochloris aestuarii (strain DSM 271 / SK 413)</name>
    <dbReference type="NCBI Taxonomy" id="290512"/>
    <lineage>
        <taxon>Bacteria</taxon>
        <taxon>Pseudomonadati</taxon>
        <taxon>Chlorobiota</taxon>
        <taxon>Chlorobiia</taxon>
        <taxon>Chlorobiales</taxon>
        <taxon>Chlorobiaceae</taxon>
        <taxon>Prosthecochloris</taxon>
    </lineage>
</organism>
<accession>B4S5H8</accession>
<keyword id="KW-0067">ATP-binding</keyword>
<keyword id="KW-0418">Kinase</keyword>
<keyword id="KW-0460">Magnesium</keyword>
<keyword id="KW-0479">Metal-binding</keyword>
<keyword id="KW-0511">Multifunctional enzyme</keyword>
<keyword id="KW-0547">Nucleotide-binding</keyword>
<keyword id="KW-0723">Serine/threonine-protein kinase</keyword>
<keyword id="KW-0808">Transferase</keyword>
<evidence type="ECO:0000255" key="1">
    <source>
        <dbReference type="HAMAP-Rule" id="MF_01249"/>
    </source>
</evidence>
<proteinExistence type="inferred from homology"/>
<comment type="function">
    <text evidence="1">Catalyzes the ATP- as well as the pyrophosphate-dependent phosphorylation of a specific serine residue in HPr, a phosphocarrier protein of the phosphoenolpyruvate-dependent sugar phosphotransferase system (PTS). HprK/P also catalyzes the pyrophosphate-producing, inorganic phosphate-dependent dephosphorylation (phosphorolysis) of seryl-phosphorylated HPr (P-Ser-HPr).</text>
</comment>
<comment type="catalytic activity">
    <reaction evidence="1">
        <text>[HPr protein]-L-serine + ATP = [HPr protein]-O-phospho-L-serine + ADP + H(+)</text>
        <dbReference type="Rhea" id="RHEA:46600"/>
        <dbReference type="Rhea" id="RHEA-COMP:11602"/>
        <dbReference type="Rhea" id="RHEA-COMP:11603"/>
        <dbReference type="ChEBI" id="CHEBI:15378"/>
        <dbReference type="ChEBI" id="CHEBI:29999"/>
        <dbReference type="ChEBI" id="CHEBI:30616"/>
        <dbReference type="ChEBI" id="CHEBI:83421"/>
        <dbReference type="ChEBI" id="CHEBI:456216"/>
    </reaction>
</comment>
<comment type="catalytic activity">
    <reaction evidence="1">
        <text>[HPr protein]-O-phospho-L-serine + phosphate + H(+) = [HPr protein]-L-serine + diphosphate</text>
        <dbReference type="Rhea" id="RHEA:46604"/>
        <dbReference type="Rhea" id="RHEA-COMP:11602"/>
        <dbReference type="Rhea" id="RHEA-COMP:11603"/>
        <dbReference type="ChEBI" id="CHEBI:15378"/>
        <dbReference type="ChEBI" id="CHEBI:29999"/>
        <dbReference type="ChEBI" id="CHEBI:33019"/>
        <dbReference type="ChEBI" id="CHEBI:43474"/>
        <dbReference type="ChEBI" id="CHEBI:83421"/>
    </reaction>
</comment>
<comment type="cofactor">
    <cofactor evidence="1">
        <name>Mg(2+)</name>
        <dbReference type="ChEBI" id="CHEBI:18420"/>
    </cofactor>
</comment>
<comment type="subunit">
    <text evidence="1">Homohexamer.</text>
</comment>
<comment type="domain">
    <text evidence="1">The Walker A ATP-binding motif also binds Pi and PPi.</text>
</comment>
<comment type="miscellaneous">
    <text evidence="1">Both phosphorylation and phosphorolysis are carried out by the same active site and suggest a common mechanism for both reactions.</text>
</comment>
<comment type="similarity">
    <text evidence="1">Belongs to the HPrK/P family.</text>
</comment>
<gene>
    <name evidence="1" type="primary">hprK</name>
    <name type="ordered locus">Paes_0519</name>
</gene>
<reference key="1">
    <citation type="submission" date="2008-06" db="EMBL/GenBank/DDBJ databases">
        <title>Complete sequence of chromosome of Prosthecochloris aestuarii DSM 271.</title>
        <authorList>
            <consortium name="US DOE Joint Genome Institute"/>
            <person name="Lucas S."/>
            <person name="Copeland A."/>
            <person name="Lapidus A."/>
            <person name="Glavina del Rio T."/>
            <person name="Dalin E."/>
            <person name="Tice H."/>
            <person name="Bruce D."/>
            <person name="Goodwin L."/>
            <person name="Pitluck S."/>
            <person name="Schmutz J."/>
            <person name="Larimer F."/>
            <person name="Land M."/>
            <person name="Hauser L."/>
            <person name="Kyrpides N."/>
            <person name="Anderson I."/>
            <person name="Liu Z."/>
            <person name="Li T."/>
            <person name="Zhao F."/>
            <person name="Overmann J."/>
            <person name="Bryant D.A."/>
            <person name="Richardson P."/>
        </authorList>
    </citation>
    <scope>NUCLEOTIDE SEQUENCE [LARGE SCALE GENOMIC DNA]</scope>
    <source>
        <strain>DSM 271 / SK 413</strain>
    </source>
</reference>
<name>HPRK_PROA2</name>
<protein>
    <recommendedName>
        <fullName evidence="1">HPr kinase/phosphorylase</fullName>
        <shortName evidence="1">HPrK/P</shortName>
        <ecNumber evidence="1">2.7.11.-</ecNumber>
        <ecNumber evidence="1">2.7.4.-</ecNumber>
    </recommendedName>
    <alternativeName>
        <fullName evidence="1">HPr(Ser) kinase/phosphorylase</fullName>
    </alternativeName>
</protein>
<sequence>MNLDQKGLKKRSMTVAYFFENISKSLDIKLRRLNEVDEQKRRIFERDLHRPGLALAGFTNLFTYKRVQILGNTETRFLNHLEDDDRKRAFESLIKFKLPCIILTSNNKLEPELLDMATRAGVPVFVTRHSSTKTIYLLTDFLDDQFSQYQQFHGSMVDVYGVGVMLIGNSGLGKSEVALDLVERGHRLVADDAVVINRKGENVLIASGNEIVDHFMEIRGLGVVDVKAIFGIRAIRDKKVVQVVVELLEWNEESDYERLGLDTKTTKILGVDIPLIQLPINPGKNITVIIEVVALNYLLKHYSGYVAAEALEQRIKRVITNESLKKSGKGRTYLAKDYEE</sequence>
<dbReference type="EC" id="2.7.11.-" evidence="1"/>
<dbReference type="EC" id="2.7.4.-" evidence="1"/>
<dbReference type="EMBL" id="CP001108">
    <property type="protein sequence ID" value="ACF45575.1"/>
    <property type="molecule type" value="Genomic_DNA"/>
</dbReference>
<dbReference type="RefSeq" id="WP_012505112.1">
    <property type="nucleotide sequence ID" value="NC_011059.1"/>
</dbReference>
<dbReference type="SMR" id="B4S5H8"/>
<dbReference type="STRING" id="290512.Paes_0519"/>
<dbReference type="KEGG" id="paa:Paes_0519"/>
<dbReference type="eggNOG" id="COG1493">
    <property type="taxonomic scope" value="Bacteria"/>
</dbReference>
<dbReference type="HOGENOM" id="CLU_052030_0_1_10"/>
<dbReference type="Proteomes" id="UP000002725">
    <property type="component" value="Chromosome"/>
</dbReference>
<dbReference type="GO" id="GO:0005524">
    <property type="term" value="F:ATP binding"/>
    <property type="evidence" value="ECO:0007669"/>
    <property type="project" value="UniProtKB-UniRule"/>
</dbReference>
<dbReference type="GO" id="GO:0000287">
    <property type="term" value="F:magnesium ion binding"/>
    <property type="evidence" value="ECO:0007669"/>
    <property type="project" value="UniProtKB-UniRule"/>
</dbReference>
<dbReference type="GO" id="GO:0000155">
    <property type="term" value="F:phosphorelay sensor kinase activity"/>
    <property type="evidence" value="ECO:0007669"/>
    <property type="project" value="InterPro"/>
</dbReference>
<dbReference type="GO" id="GO:0004674">
    <property type="term" value="F:protein serine/threonine kinase activity"/>
    <property type="evidence" value="ECO:0007669"/>
    <property type="project" value="UniProtKB-KW"/>
</dbReference>
<dbReference type="GO" id="GO:0004712">
    <property type="term" value="F:protein serine/threonine/tyrosine kinase activity"/>
    <property type="evidence" value="ECO:0007669"/>
    <property type="project" value="UniProtKB-UniRule"/>
</dbReference>
<dbReference type="GO" id="GO:0006109">
    <property type="term" value="P:regulation of carbohydrate metabolic process"/>
    <property type="evidence" value="ECO:0007669"/>
    <property type="project" value="UniProtKB-UniRule"/>
</dbReference>
<dbReference type="CDD" id="cd01918">
    <property type="entry name" value="HprK_C"/>
    <property type="match status" value="1"/>
</dbReference>
<dbReference type="FunFam" id="3.40.50.300:FF:000174">
    <property type="entry name" value="HPr kinase/phosphorylase"/>
    <property type="match status" value="1"/>
</dbReference>
<dbReference type="Gene3D" id="3.40.1390.20">
    <property type="entry name" value="HprK N-terminal domain-like"/>
    <property type="match status" value="1"/>
</dbReference>
<dbReference type="Gene3D" id="3.40.50.300">
    <property type="entry name" value="P-loop containing nucleotide triphosphate hydrolases"/>
    <property type="match status" value="1"/>
</dbReference>
<dbReference type="HAMAP" id="MF_01249">
    <property type="entry name" value="HPr_kinase"/>
    <property type="match status" value="1"/>
</dbReference>
<dbReference type="InterPro" id="IPR003755">
    <property type="entry name" value="HPr(Ser)_kin/Pase"/>
</dbReference>
<dbReference type="InterPro" id="IPR011104">
    <property type="entry name" value="Hpr_kin/Pase_C"/>
</dbReference>
<dbReference type="InterPro" id="IPR011126">
    <property type="entry name" value="Hpr_kin/Pase_Hpr_N"/>
</dbReference>
<dbReference type="InterPro" id="IPR027417">
    <property type="entry name" value="P-loop_NTPase"/>
</dbReference>
<dbReference type="InterPro" id="IPR028979">
    <property type="entry name" value="Ser_kin/Pase_Hpr-like_N_sf"/>
</dbReference>
<dbReference type="NCBIfam" id="TIGR00679">
    <property type="entry name" value="hpr-ser"/>
    <property type="match status" value="1"/>
</dbReference>
<dbReference type="PANTHER" id="PTHR30305:SF1">
    <property type="entry name" value="HPR KINASE_PHOSPHORYLASE"/>
    <property type="match status" value="1"/>
</dbReference>
<dbReference type="PANTHER" id="PTHR30305">
    <property type="entry name" value="PROTEIN YJDM-RELATED"/>
    <property type="match status" value="1"/>
</dbReference>
<dbReference type="Pfam" id="PF07475">
    <property type="entry name" value="Hpr_kinase_C"/>
    <property type="match status" value="1"/>
</dbReference>
<dbReference type="Pfam" id="PF02603">
    <property type="entry name" value="Hpr_kinase_N"/>
    <property type="match status" value="1"/>
</dbReference>
<dbReference type="SUPFAM" id="SSF75138">
    <property type="entry name" value="HprK N-terminal domain-like"/>
    <property type="match status" value="1"/>
</dbReference>
<dbReference type="SUPFAM" id="SSF53795">
    <property type="entry name" value="PEP carboxykinase-like"/>
    <property type="match status" value="1"/>
</dbReference>